<accession>Q9USQ4</accession>
<sequence>MSSDTKTLENSKGNSATDADTKNPSSSDSRAIEQLVTQGNMAYAQKNYEEAVDKYGQALMQSESIHGSESLENRNVLWLYGKSLFQIAIENSQVLGNALGAKESVSQATESFEEPEAIGSFTFSGQKIENKYTVNEENSSIAHPEKESEEKETNEASPASEEDEDDFNVAWEVLDLTRVMQSKAVDAYPDSKDEKIRLADIYDLLGELSLEIENFSQASQDLKTALEWKEKVYNVSNNTLLSEAHYKLALALEFTNPEDPSNKSRACEHVEKAAEILKNVLNERENEVTDKKGKGKQKAEESTLTSDLENLREMLSELEQKTLDLKHGAPSLEEAVMSKMHESSLLSKDSSSLAQAVAEAVKNANDLGGLVKRKRTKQEVTSSSQKEGPKDKKKKD</sequence>
<evidence type="ECO:0000255" key="1"/>
<evidence type="ECO:0000256" key="2">
    <source>
        <dbReference type="SAM" id="MobiDB-lite"/>
    </source>
</evidence>
<evidence type="ECO:0000269" key="3">
    <source>
    </source>
</evidence>
<evidence type="ECO:0000305" key="4"/>
<keyword id="KW-0175">Coiled coil</keyword>
<keyword id="KW-0539">Nucleus</keyword>
<keyword id="KW-1185">Reference proteome</keyword>
<keyword id="KW-0677">Repeat</keyword>
<keyword id="KW-0802">TPR repeat</keyword>
<name>SIM3_SCHPO</name>
<comment type="function">
    <text evidence="3">Histone H3 and H3-like CENP-A-specific chaperone. Promotes delivery and incorporation of CENP-A in centromeric chromatin, probably by escorting nascent CENP-A to CENP-A chromatin assembly factors. Required for central core silencing and normal chromosome segregation.</text>
</comment>
<comment type="subunit">
    <text evidence="3">Interacts with cnp1, hht1, hht2 and hht3; has a preference for CENP-A (cnp1) over histone H3 (hht1/2/3).</text>
</comment>
<comment type="subcellular location">
    <subcellularLocation>
        <location evidence="3">Nucleus</location>
    </subcellularLocation>
</comment>
<comment type="similarity">
    <text evidence="4">Belongs to the NASP family.</text>
</comment>
<proteinExistence type="evidence at protein level"/>
<gene>
    <name type="primary">sim3</name>
    <name type="ORF">SPBC577.15c</name>
</gene>
<dbReference type="EMBL" id="CU329671">
    <property type="protein sequence ID" value="CAB54823.1"/>
    <property type="molecule type" value="Genomic_DNA"/>
</dbReference>
<dbReference type="PIR" id="T40559">
    <property type="entry name" value="T40559"/>
</dbReference>
<dbReference type="RefSeq" id="NP_595313.1">
    <property type="nucleotide sequence ID" value="NM_001021220.2"/>
</dbReference>
<dbReference type="SMR" id="Q9USQ4"/>
<dbReference type="BioGRID" id="277411">
    <property type="interactions" value="16"/>
</dbReference>
<dbReference type="FunCoup" id="Q9USQ4">
    <property type="interactions" value="37"/>
</dbReference>
<dbReference type="STRING" id="284812.Q9USQ4"/>
<dbReference type="iPTMnet" id="Q9USQ4"/>
<dbReference type="PaxDb" id="4896-SPBC577.15c.1"/>
<dbReference type="EnsemblFungi" id="SPBC577.15c.1">
    <property type="protein sequence ID" value="SPBC577.15c.1:pep"/>
    <property type="gene ID" value="SPBC577.15c"/>
</dbReference>
<dbReference type="GeneID" id="2540895"/>
<dbReference type="KEGG" id="spo:2540895"/>
<dbReference type="PomBase" id="SPBC577.15c">
    <property type="gene designation" value="sim3"/>
</dbReference>
<dbReference type="VEuPathDB" id="FungiDB:SPBC577.15c"/>
<dbReference type="eggNOG" id="KOG4563">
    <property type="taxonomic scope" value="Eukaryota"/>
</dbReference>
<dbReference type="HOGENOM" id="CLU_028900_1_0_1"/>
<dbReference type="InParanoid" id="Q9USQ4"/>
<dbReference type="OMA" id="IAECHYK"/>
<dbReference type="PhylomeDB" id="Q9USQ4"/>
<dbReference type="PRO" id="PR:Q9USQ4"/>
<dbReference type="Proteomes" id="UP000002485">
    <property type="component" value="Chromosome II"/>
</dbReference>
<dbReference type="GO" id="GO:0000785">
    <property type="term" value="C:chromatin"/>
    <property type="evidence" value="ECO:0000305"/>
    <property type="project" value="PomBase"/>
</dbReference>
<dbReference type="GO" id="GO:0005654">
    <property type="term" value="C:nucleoplasm"/>
    <property type="evidence" value="ECO:0000314"/>
    <property type="project" value="PomBase"/>
</dbReference>
<dbReference type="GO" id="GO:0005634">
    <property type="term" value="C:nucleus"/>
    <property type="evidence" value="ECO:0007005"/>
    <property type="project" value="PomBase"/>
</dbReference>
<dbReference type="GO" id="GO:0042393">
    <property type="term" value="F:histone binding"/>
    <property type="evidence" value="ECO:0000318"/>
    <property type="project" value="GO_Central"/>
</dbReference>
<dbReference type="GO" id="GO:0140713">
    <property type="term" value="F:histone chaperone activity"/>
    <property type="evidence" value="ECO:0000269"/>
    <property type="project" value="PomBase"/>
</dbReference>
<dbReference type="GO" id="GO:0034080">
    <property type="term" value="P:CENP-A containing chromatin assembly"/>
    <property type="evidence" value="ECO:0000315"/>
    <property type="project" value="PomBase"/>
</dbReference>
<dbReference type="GO" id="GO:0006335">
    <property type="term" value="P:DNA replication-dependent chromatin assembly"/>
    <property type="evidence" value="ECO:0000318"/>
    <property type="project" value="GO_Central"/>
</dbReference>
<dbReference type="FunFam" id="1.25.40.10:FF:002678">
    <property type="entry name" value="NASP-related protein sim3"/>
    <property type="match status" value="1"/>
</dbReference>
<dbReference type="Gene3D" id="1.25.40.10">
    <property type="entry name" value="Tetratricopeptide repeat domain"/>
    <property type="match status" value="1"/>
</dbReference>
<dbReference type="InterPro" id="IPR051730">
    <property type="entry name" value="NASP-like"/>
</dbReference>
<dbReference type="InterPro" id="IPR019544">
    <property type="entry name" value="Tetratricopeptide_SHNi-TPR_dom"/>
</dbReference>
<dbReference type="InterPro" id="IPR011990">
    <property type="entry name" value="TPR-like_helical_dom_sf"/>
</dbReference>
<dbReference type="InterPro" id="IPR019734">
    <property type="entry name" value="TPR_rpt"/>
</dbReference>
<dbReference type="PANTHER" id="PTHR15081:SF1">
    <property type="entry name" value="NUCLEAR AUTOANTIGENIC SPERM PROTEIN"/>
    <property type="match status" value="1"/>
</dbReference>
<dbReference type="PANTHER" id="PTHR15081">
    <property type="entry name" value="NUCLEAR AUTOANTIGENIC SPERM PROTEIN NASP -RELATED"/>
    <property type="match status" value="1"/>
</dbReference>
<dbReference type="Pfam" id="PF10516">
    <property type="entry name" value="SHNi-TPR"/>
    <property type="match status" value="1"/>
</dbReference>
<dbReference type="SMART" id="SM00028">
    <property type="entry name" value="TPR"/>
    <property type="match status" value="2"/>
</dbReference>
<dbReference type="SUPFAM" id="SSF48452">
    <property type="entry name" value="TPR-like"/>
    <property type="match status" value="1"/>
</dbReference>
<reference key="1">
    <citation type="journal article" date="2002" name="Nature">
        <title>The genome sequence of Schizosaccharomyces pombe.</title>
        <authorList>
            <person name="Wood V."/>
            <person name="Gwilliam R."/>
            <person name="Rajandream M.A."/>
            <person name="Lyne M.H."/>
            <person name="Lyne R."/>
            <person name="Stewart A."/>
            <person name="Sgouros J.G."/>
            <person name="Peat N."/>
            <person name="Hayles J."/>
            <person name="Baker S.G."/>
            <person name="Basham D."/>
            <person name="Bowman S."/>
            <person name="Brooks K."/>
            <person name="Brown D."/>
            <person name="Brown S."/>
            <person name="Chillingworth T."/>
            <person name="Churcher C.M."/>
            <person name="Collins M."/>
            <person name="Connor R."/>
            <person name="Cronin A."/>
            <person name="Davis P."/>
            <person name="Feltwell T."/>
            <person name="Fraser A."/>
            <person name="Gentles S."/>
            <person name="Goble A."/>
            <person name="Hamlin N."/>
            <person name="Harris D.E."/>
            <person name="Hidalgo J."/>
            <person name="Hodgson G."/>
            <person name="Holroyd S."/>
            <person name="Hornsby T."/>
            <person name="Howarth S."/>
            <person name="Huckle E.J."/>
            <person name="Hunt S."/>
            <person name="Jagels K."/>
            <person name="James K.D."/>
            <person name="Jones L."/>
            <person name="Jones M."/>
            <person name="Leather S."/>
            <person name="McDonald S."/>
            <person name="McLean J."/>
            <person name="Mooney P."/>
            <person name="Moule S."/>
            <person name="Mungall K.L."/>
            <person name="Murphy L.D."/>
            <person name="Niblett D."/>
            <person name="Odell C."/>
            <person name="Oliver K."/>
            <person name="O'Neil S."/>
            <person name="Pearson D."/>
            <person name="Quail M.A."/>
            <person name="Rabbinowitsch E."/>
            <person name="Rutherford K.M."/>
            <person name="Rutter S."/>
            <person name="Saunders D."/>
            <person name="Seeger K."/>
            <person name="Sharp S."/>
            <person name="Skelton J."/>
            <person name="Simmonds M.N."/>
            <person name="Squares R."/>
            <person name="Squares S."/>
            <person name="Stevens K."/>
            <person name="Taylor K."/>
            <person name="Taylor R.G."/>
            <person name="Tivey A."/>
            <person name="Walsh S.V."/>
            <person name="Warren T."/>
            <person name="Whitehead S."/>
            <person name="Woodward J.R."/>
            <person name="Volckaert G."/>
            <person name="Aert R."/>
            <person name="Robben J."/>
            <person name="Grymonprez B."/>
            <person name="Weltjens I."/>
            <person name="Vanstreels E."/>
            <person name="Rieger M."/>
            <person name="Schaefer M."/>
            <person name="Mueller-Auer S."/>
            <person name="Gabel C."/>
            <person name="Fuchs M."/>
            <person name="Duesterhoeft A."/>
            <person name="Fritzc C."/>
            <person name="Holzer E."/>
            <person name="Moestl D."/>
            <person name="Hilbert H."/>
            <person name="Borzym K."/>
            <person name="Langer I."/>
            <person name="Beck A."/>
            <person name="Lehrach H."/>
            <person name="Reinhardt R."/>
            <person name="Pohl T.M."/>
            <person name="Eger P."/>
            <person name="Zimmermann W."/>
            <person name="Wedler H."/>
            <person name="Wambutt R."/>
            <person name="Purnelle B."/>
            <person name="Goffeau A."/>
            <person name="Cadieu E."/>
            <person name="Dreano S."/>
            <person name="Gloux S."/>
            <person name="Lelaure V."/>
            <person name="Mottier S."/>
            <person name="Galibert F."/>
            <person name="Aves S.J."/>
            <person name="Xiang Z."/>
            <person name="Hunt C."/>
            <person name="Moore K."/>
            <person name="Hurst S.M."/>
            <person name="Lucas M."/>
            <person name="Rochet M."/>
            <person name="Gaillardin C."/>
            <person name="Tallada V.A."/>
            <person name="Garzon A."/>
            <person name="Thode G."/>
            <person name="Daga R.R."/>
            <person name="Cruzado L."/>
            <person name="Jimenez J."/>
            <person name="Sanchez M."/>
            <person name="del Rey F."/>
            <person name="Benito J."/>
            <person name="Dominguez A."/>
            <person name="Revuelta J.L."/>
            <person name="Moreno S."/>
            <person name="Armstrong J."/>
            <person name="Forsburg S.L."/>
            <person name="Cerutti L."/>
            <person name="Lowe T."/>
            <person name="McCombie W.R."/>
            <person name="Paulsen I."/>
            <person name="Potashkin J."/>
            <person name="Shpakovski G.V."/>
            <person name="Ussery D."/>
            <person name="Barrell B.G."/>
            <person name="Nurse P."/>
        </authorList>
    </citation>
    <scope>NUCLEOTIDE SEQUENCE [LARGE SCALE GENOMIC DNA]</scope>
    <source>
        <strain>972 / ATCC 24843</strain>
    </source>
</reference>
<reference key="2">
    <citation type="journal article" date="2007" name="Mol. Cell">
        <title>A NASP (N1/N2)-related protein, Sim3, binds CENP-A and is required for its deposition at fission yeast centromeres.</title>
        <authorList>
            <person name="Dunleavy E.M."/>
            <person name="Pidoux A.L."/>
            <person name="Monet M."/>
            <person name="Bonilla C."/>
            <person name="Richardson W."/>
            <person name="Hamilton G.L."/>
            <person name="Ekwall K."/>
            <person name="McLaughlin P.J."/>
            <person name="Allshire R.C."/>
        </authorList>
    </citation>
    <scope>FUNCTION</scope>
    <scope>SUBCELLULAR LOCATION</scope>
    <scope>INTERACTION WITH CNP1 AND HHT1; HHT2 AND HHT3</scope>
    <scope>MUTAGENESIS OF GLY-81 AND GLU-207</scope>
</reference>
<protein>
    <recommendedName>
        <fullName>NASP-related protein sim3</fullName>
    </recommendedName>
    <alternativeName>
        <fullName>CENP-A escort protein sim3</fullName>
    </alternativeName>
    <alternativeName>
        <fullName>Silencing in the middle of the centromere protein 3</fullName>
    </alternativeName>
</protein>
<organism>
    <name type="scientific">Schizosaccharomyces pombe (strain 972 / ATCC 24843)</name>
    <name type="common">Fission yeast</name>
    <dbReference type="NCBI Taxonomy" id="284812"/>
    <lineage>
        <taxon>Eukaryota</taxon>
        <taxon>Fungi</taxon>
        <taxon>Dikarya</taxon>
        <taxon>Ascomycota</taxon>
        <taxon>Taphrinomycotina</taxon>
        <taxon>Schizosaccharomycetes</taxon>
        <taxon>Schizosaccharomycetales</taxon>
        <taxon>Schizosaccharomycetaceae</taxon>
        <taxon>Schizosaccharomyces</taxon>
    </lineage>
</organism>
<feature type="chain" id="PRO_0000363381" description="NASP-related protein sim3">
    <location>
        <begin position="1"/>
        <end position="396"/>
    </location>
</feature>
<feature type="repeat" description="TPR 1">
    <location>
        <begin position="32"/>
        <end position="65"/>
    </location>
</feature>
<feature type="repeat" description="TPR 2">
    <location>
        <begin position="89"/>
        <end position="122"/>
    </location>
</feature>
<feature type="repeat" description="TPR 3">
    <location>
        <begin position="199"/>
        <end position="232"/>
    </location>
</feature>
<feature type="region of interest" description="Disordered" evidence="2">
    <location>
        <begin position="1"/>
        <end position="31"/>
    </location>
</feature>
<feature type="region of interest" description="Disordered" evidence="2">
    <location>
        <begin position="135"/>
        <end position="164"/>
    </location>
</feature>
<feature type="region of interest" description="Disordered" evidence="2">
    <location>
        <begin position="284"/>
        <end position="307"/>
    </location>
</feature>
<feature type="region of interest" description="Disordered" evidence="2">
    <location>
        <begin position="334"/>
        <end position="396"/>
    </location>
</feature>
<feature type="coiled-coil region" evidence="1">
    <location>
        <begin position="267"/>
        <end position="329"/>
    </location>
</feature>
<feature type="compositionally biased region" description="Basic and acidic residues" evidence="2">
    <location>
        <begin position="143"/>
        <end position="154"/>
    </location>
</feature>
<feature type="compositionally biased region" description="Basic and acidic residues" evidence="2">
    <location>
        <begin position="284"/>
        <end position="301"/>
    </location>
</feature>
<feature type="compositionally biased region" description="Low complexity" evidence="2">
    <location>
        <begin position="343"/>
        <end position="353"/>
    </location>
</feature>
<feature type="mutagenesis site" description="In sim3-143; Reduces interaction with CENP-A and causes abnormal mitotic phenotypes, including hypercondensed chromatin, lagging chromosomes in anaphase, and unequal segregation of chromosomes." evidence="3">
    <original>G</original>
    <variation>E</variation>
    <location>
        <position position="81"/>
    </location>
</feature>
<feature type="mutagenesis site" description="In sim3-205; Reduces interaction with CENP-A and causes abnormal mitotic phenotypes, including hypercondensed chromatin, lagging chromosomes in anaphase, and unequal segregation of chromosomes." evidence="3">
    <original>E</original>
    <variation>K</variation>
    <location>
        <position position="207"/>
    </location>
</feature>